<organism>
    <name type="scientific">Salmonella choleraesuis (strain SC-B67)</name>
    <dbReference type="NCBI Taxonomy" id="321314"/>
    <lineage>
        <taxon>Bacteria</taxon>
        <taxon>Pseudomonadati</taxon>
        <taxon>Pseudomonadota</taxon>
        <taxon>Gammaproteobacteria</taxon>
        <taxon>Enterobacterales</taxon>
        <taxon>Enterobacteriaceae</taxon>
        <taxon>Salmonella</taxon>
    </lineage>
</organism>
<accession>Q57P18</accession>
<protein>
    <recommendedName>
        <fullName evidence="1">FMN-dependent NADH:quinone oxidoreductase</fullName>
        <ecNumber evidence="1">1.6.5.-</ecNumber>
    </recommendedName>
    <alternativeName>
        <fullName evidence="1">Azo-dye reductase</fullName>
    </alternativeName>
    <alternativeName>
        <fullName evidence="1">FMN-dependent NADH-azo compound oxidoreductase</fullName>
    </alternativeName>
    <alternativeName>
        <fullName evidence="1">FMN-dependent NADH-azoreductase</fullName>
        <ecNumber evidence="1">1.7.1.17</ecNumber>
    </alternativeName>
</protein>
<name>AZOR_SALCH</name>
<evidence type="ECO:0000255" key="1">
    <source>
        <dbReference type="HAMAP-Rule" id="MF_01216"/>
    </source>
</evidence>
<dbReference type="EC" id="1.6.5.-" evidence="1"/>
<dbReference type="EC" id="1.7.1.17" evidence="1"/>
<dbReference type="EMBL" id="AE017220">
    <property type="protein sequence ID" value="AAX65543.1"/>
    <property type="molecule type" value="Genomic_DNA"/>
</dbReference>
<dbReference type="RefSeq" id="WP_011264295.1">
    <property type="nucleotide sequence ID" value="NC_006905.1"/>
</dbReference>
<dbReference type="SMR" id="Q57P18"/>
<dbReference type="KEGG" id="sec:SCH_1637"/>
<dbReference type="HOGENOM" id="CLU_088964_0_0_6"/>
<dbReference type="Proteomes" id="UP000000538">
    <property type="component" value="Chromosome"/>
</dbReference>
<dbReference type="GO" id="GO:0009055">
    <property type="term" value="F:electron transfer activity"/>
    <property type="evidence" value="ECO:0007669"/>
    <property type="project" value="UniProtKB-UniRule"/>
</dbReference>
<dbReference type="GO" id="GO:0010181">
    <property type="term" value="F:FMN binding"/>
    <property type="evidence" value="ECO:0007669"/>
    <property type="project" value="UniProtKB-UniRule"/>
</dbReference>
<dbReference type="GO" id="GO:0016652">
    <property type="term" value="F:oxidoreductase activity, acting on NAD(P)H as acceptor"/>
    <property type="evidence" value="ECO:0007669"/>
    <property type="project" value="UniProtKB-UniRule"/>
</dbReference>
<dbReference type="GO" id="GO:0016655">
    <property type="term" value="F:oxidoreductase activity, acting on NAD(P)H, quinone or similar compound as acceptor"/>
    <property type="evidence" value="ECO:0007669"/>
    <property type="project" value="InterPro"/>
</dbReference>
<dbReference type="FunFam" id="3.40.50.360:FF:000010">
    <property type="entry name" value="FMN-dependent NADH-azoreductase"/>
    <property type="match status" value="1"/>
</dbReference>
<dbReference type="Gene3D" id="3.40.50.360">
    <property type="match status" value="1"/>
</dbReference>
<dbReference type="HAMAP" id="MF_01216">
    <property type="entry name" value="Azoreductase_type1"/>
    <property type="match status" value="1"/>
</dbReference>
<dbReference type="InterPro" id="IPR003680">
    <property type="entry name" value="Flavodoxin_fold"/>
</dbReference>
<dbReference type="InterPro" id="IPR029039">
    <property type="entry name" value="Flavoprotein-like_sf"/>
</dbReference>
<dbReference type="InterPro" id="IPR050104">
    <property type="entry name" value="FMN-dep_NADH:Q_OxRdtase_AzoR1"/>
</dbReference>
<dbReference type="InterPro" id="IPR023048">
    <property type="entry name" value="NADH:quinone_OxRdtase_FMN_depd"/>
</dbReference>
<dbReference type="PANTHER" id="PTHR43741">
    <property type="entry name" value="FMN-DEPENDENT NADH-AZOREDUCTASE 1"/>
    <property type="match status" value="1"/>
</dbReference>
<dbReference type="PANTHER" id="PTHR43741:SF2">
    <property type="entry name" value="FMN-DEPENDENT NADH:QUINONE OXIDOREDUCTASE"/>
    <property type="match status" value="1"/>
</dbReference>
<dbReference type="Pfam" id="PF02525">
    <property type="entry name" value="Flavodoxin_2"/>
    <property type="match status" value="1"/>
</dbReference>
<dbReference type="SUPFAM" id="SSF52218">
    <property type="entry name" value="Flavoproteins"/>
    <property type="match status" value="1"/>
</dbReference>
<gene>
    <name evidence="1" type="primary">azoR</name>
    <name type="ordered locus">SCH_1637</name>
</gene>
<reference key="1">
    <citation type="journal article" date="2005" name="Nucleic Acids Res.">
        <title>The genome sequence of Salmonella enterica serovar Choleraesuis, a highly invasive and resistant zoonotic pathogen.</title>
        <authorList>
            <person name="Chiu C.-H."/>
            <person name="Tang P."/>
            <person name="Chu C."/>
            <person name="Hu S."/>
            <person name="Bao Q."/>
            <person name="Yu J."/>
            <person name="Chou Y.-Y."/>
            <person name="Wang H.-S."/>
            <person name="Lee Y.-S."/>
        </authorList>
    </citation>
    <scope>NUCLEOTIDE SEQUENCE [LARGE SCALE GENOMIC DNA]</scope>
    <source>
        <strain>SC-B67</strain>
    </source>
</reference>
<sequence length="201" mass="21611">MSKVLVLKSSILAGYSQSGQLTDYFIEQWREKHVADEITVRDLAAPPVPVLDGELVGAMRPGDAPLTPRQQDALALSDELIAELKAHDVIVIAAPMYNFNIPTQLKNYFDLIARAGITFRYTEKGPEGLVTGKRAVVLSSRGGIHKDTPTDLIAPYLKVFLGFIGITDVNFVFAEGIAYGPEVAAKAQADAKAAIDSVVAA</sequence>
<feature type="chain" id="PRO_0000245967" description="FMN-dependent NADH:quinone oxidoreductase">
    <location>
        <begin position="1"/>
        <end position="201"/>
    </location>
</feature>
<feature type="binding site" evidence="1">
    <location>
        <position position="10"/>
    </location>
    <ligand>
        <name>FMN</name>
        <dbReference type="ChEBI" id="CHEBI:58210"/>
    </ligand>
</feature>
<feature type="binding site" evidence="1">
    <location>
        <begin position="16"/>
        <end position="18"/>
    </location>
    <ligand>
        <name>FMN</name>
        <dbReference type="ChEBI" id="CHEBI:58210"/>
    </ligand>
</feature>
<feature type="binding site" evidence="1">
    <location>
        <begin position="96"/>
        <end position="99"/>
    </location>
    <ligand>
        <name>FMN</name>
        <dbReference type="ChEBI" id="CHEBI:58210"/>
    </ligand>
</feature>
<feature type="binding site" evidence="1">
    <location>
        <begin position="140"/>
        <end position="143"/>
    </location>
    <ligand>
        <name>FMN</name>
        <dbReference type="ChEBI" id="CHEBI:58210"/>
    </ligand>
</feature>
<proteinExistence type="inferred from homology"/>
<keyword id="KW-0285">Flavoprotein</keyword>
<keyword id="KW-0288">FMN</keyword>
<keyword id="KW-0520">NAD</keyword>
<keyword id="KW-0560">Oxidoreductase</keyword>
<comment type="function">
    <text evidence="1">Quinone reductase that provides resistance to thiol-specific stress caused by electrophilic quinones.</text>
</comment>
<comment type="function">
    <text evidence="1">Also exhibits azoreductase activity. Catalyzes the reductive cleavage of the azo bond in aromatic azo compounds to the corresponding amines.</text>
</comment>
<comment type="catalytic activity">
    <reaction evidence="1">
        <text>2 a quinone + NADH + H(+) = 2 a 1,4-benzosemiquinone + NAD(+)</text>
        <dbReference type="Rhea" id="RHEA:65952"/>
        <dbReference type="ChEBI" id="CHEBI:15378"/>
        <dbReference type="ChEBI" id="CHEBI:57540"/>
        <dbReference type="ChEBI" id="CHEBI:57945"/>
        <dbReference type="ChEBI" id="CHEBI:132124"/>
        <dbReference type="ChEBI" id="CHEBI:134225"/>
    </reaction>
</comment>
<comment type="catalytic activity">
    <reaction evidence="1">
        <text>N,N-dimethyl-1,4-phenylenediamine + anthranilate + 2 NAD(+) = 2-(4-dimethylaminophenyl)diazenylbenzoate + 2 NADH + 2 H(+)</text>
        <dbReference type="Rhea" id="RHEA:55872"/>
        <dbReference type="ChEBI" id="CHEBI:15378"/>
        <dbReference type="ChEBI" id="CHEBI:15783"/>
        <dbReference type="ChEBI" id="CHEBI:16567"/>
        <dbReference type="ChEBI" id="CHEBI:57540"/>
        <dbReference type="ChEBI" id="CHEBI:57945"/>
        <dbReference type="ChEBI" id="CHEBI:71579"/>
        <dbReference type="EC" id="1.7.1.17"/>
    </reaction>
</comment>
<comment type="cofactor">
    <cofactor evidence="1">
        <name>FMN</name>
        <dbReference type="ChEBI" id="CHEBI:58210"/>
    </cofactor>
    <text evidence="1">Binds 1 FMN per subunit.</text>
</comment>
<comment type="subunit">
    <text evidence="1">Homodimer.</text>
</comment>
<comment type="similarity">
    <text evidence="1">Belongs to the azoreductase type 1 family.</text>
</comment>